<protein>
    <recommendedName>
        <fullName>Threonine synthase</fullName>
        <shortName>TS</shortName>
        <ecNumber>4.2.3.1</ecNumber>
    </recommendedName>
</protein>
<proteinExistence type="evidence at protein level"/>
<accession>P9WG59</accession>
<accession>L0T6F8</accession>
<accession>P66902</accession>
<accession>Q10610</accession>
<name>THRC_MYCTU</name>
<reference key="1">
    <citation type="journal article" date="1998" name="Nature">
        <title>Deciphering the biology of Mycobacterium tuberculosis from the complete genome sequence.</title>
        <authorList>
            <person name="Cole S.T."/>
            <person name="Brosch R."/>
            <person name="Parkhill J."/>
            <person name="Garnier T."/>
            <person name="Churcher C.M."/>
            <person name="Harris D.E."/>
            <person name="Gordon S.V."/>
            <person name="Eiglmeier K."/>
            <person name="Gas S."/>
            <person name="Barry C.E. III"/>
            <person name="Tekaia F."/>
            <person name="Badcock K."/>
            <person name="Basham D."/>
            <person name="Brown D."/>
            <person name="Chillingworth T."/>
            <person name="Connor R."/>
            <person name="Davies R.M."/>
            <person name="Devlin K."/>
            <person name="Feltwell T."/>
            <person name="Gentles S."/>
            <person name="Hamlin N."/>
            <person name="Holroyd S."/>
            <person name="Hornsby T."/>
            <person name="Jagels K."/>
            <person name="Krogh A."/>
            <person name="McLean J."/>
            <person name="Moule S."/>
            <person name="Murphy L.D."/>
            <person name="Oliver S."/>
            <person name="Osborne J."/>
            <person name="Quail M.A."/>
            <person name="Rajandream M.A."/>
            <person name="Rogers J."/>
            <person name="Rutter S."/>
            <person name="Seeger K."/>
            <person name="Skelton S."/>
            <person name="Squares S."/>
            <person name="Squares R."/>
            <person name="Sulston J.E."/>
            <person name="Taylor K."/>
            <person name="Whitehead S."/>
            <person name="Barrell B.G."/>
        </authorList>
    </citation>
    <scope>NUCLEOTIDE SEQUENCE [LARGE SCALE GENOMIC DNA]</scope>
    <source>
        <strain>ATCC 25618 / H37Rv</strain>
    </source>
</reference>
<reference key="2">
    <citation type="journal article" date="2008" name="BMC Syst. Biol.">
        <title>targetTB: a target identification pipeline for Mycobacterium tuberculosis through an interactome, reactome and genome-scale structural analysis.</title>
        <authorList>
            <person name="Raman K."/>
            <person name="Yeturu K."/>
            <person name="Chandra N."/>
        </authorList>
    </citation>
    <scope>IDENTIFICATION AS A DRUG TARGET [LARGE SCALE ANALYSIS]</scope>
</reference>
<reference key="3">
    <citation type="journal article" date="2010" name="PLoS ONE">
        <title>Prokaryotic ubiquitin-like protein (Pup) proteome of Mycobacterium tuberculosis.</title>
        <authorList>
            <person name="Festa R.A."/>
            <person name="McAllister F."/>
            <person name="Pearce M.J."/>
            <person name="Mintseris J."/>
            <person name="Burns K.E."/>
            <person name="Gygi S.P."/>
            <person name="Darwin K.H."/>
        </authorList>
    </citation>
    <scope>PUPYLATION AT LYS-151</scope>
    <scope>IDENTIFICATION BY MASS SPECTROMETRY</scope>
    <source>
        <strain>ATCC 25618 / H37Rv</strain>
    </source>
</reference>
<reference key="4">
    <citation type="journal article" date="2011" name="Mol. Cell. Proteomics">
        <title>Proteogenomic analysis of Mycobacterium tuberculosis by high resolution mass spectrometry.</title>
        <authorList>
            <person name="Kelkar D.S."/>
            <person name="Kumar D."/>
            <person name="Kumar P."/>
            <person name="Balakrishnan L."/>
            <person name="Muthusamy B."/>
            <person name="Yadav A.K."/>
            <person name="Shrivastava P."/>
            <person name="Marimuthu A."/>
            <person name="Anand S."/>
            <person name="Sundaram H."/>
            <person name="Kingsbury R."/>
            <person name="Harsha H.C."/>
            <person name="Nair B."/>
            <person name="Prasad T.S."/>
            <person name="Chauhan D.S."/>
            <person name="Katoch K."/>
            <person name="Katoch V.M."/>
            <person name="Kumar P."/>
            <person name="Chaerkady R."/>
            <person name="Ramachandran S."/>
            <person name="Dash D."/>
            <person name="Pandey A."/>
        </authorList>
    </citation>
    <scope>ACETYLATION [LARGE SCALE ANALYSIS] AT THR-2</scope>
    <scope>CLEAVAGE OF INITIATOR METHIONINE [LARGE SCALE ANALYSIS]</scope>
    <scope>IDENTIFICATION BY MASS SPECTROMETRY [LARGE SCALE ANALYSIS]</scope>
    <source>
        <strain>ATCC 25618 / H37Rv</strain>
    </source>
</reference>
<reference key="5">
    <citation type="journal article" date="2008" name="J. Mol. Biol.">
        <title>Structural, biochemical, and in vivo investigations of the threonine synthase from Mycobacterium tuberculosis.</title>
        <authorList>
            <person name="Covarrubias A.S."/>
            <person name="Hogbom M."/>
            <person name="Bergfors T."/>
            <person name="Carroll P."/>
            <person name="Mannerstedt K."/>
            <person name="Oscarson S."/>
            <person name="Parish T."/>
            <person name="Jones T.A."/>
            <person name="Mowbray S.L."/>
        </authorList>
    </citation>
    <scope>X-RAY CRYSTALLOGRAPHY (2.5 ANGSTROMS) IN COMPLEX WITH PLP</scope>
    <scope>FUNCTION</scope>
    <scope>CATALYTIC ACTIVITY</scope>
    <scope>COFACTOR</scope>
    <scope>BIOPHYSICOCHEMICAL PROPERTIES</scope>
    <scope>ACTIVITY REGULATION</scope>
    <scope>SUBUNIT</scope>
    <scope>REACTION MECHANISM</scope>
    <source>
        <strain>ATCC 25618 / H37Rv</strain>
    </source>
</reference>
<feature type="initiator methionine" description="Removed" evidence="4">
    <location>
        <position position="1"/>
    </location>
</feature>
<feature type="chain" id="PRO_0000185637" description="Threonine synthase">
    <location>
        <begin position="2"/>
        <end position="360"/>
    </location>
</feature>
<feature type="binding site" evidence="1">
    <location>
        <position position="95"/>
    </location>
    <ligand>
        <name>pyridoxal 5'-phosphate</name>
        <dbReference type="ChEBI" id="CHEBI:597326"/>
    </ligand>
</feature>
<feature type="binding site" evidence="1">
    <location>
        <begin position="196"/>
        <end position="200"/>
    </location>
    <ligand>
        <name>pyridoxal 5'-phosphate</name>
        <dbReference type="ChEBI" id="CHEBI:597326"/>
    </ligand>
</feature>
<feature type="binding site" evidence="1">
    <location>
        <position position="326"/>
    </location>
    <ligand>
        <name>pyridoxal 5'-phosphate</name>
        <dbReference type="ChEBI" id="CHEBI:597326"/>
    </ligand>
</feature>
<feature type="modified residue" description="N-acetylthreonine" evidence="4">
    <location>
        <position position="2"/>
    </location>
</feature>
<feature type="modified residue" description="N6-(pyridoxal phosphate)lysine" evidence="1">
    <location>
        <position position="69"/>
    </location>
</feature>
<feature type="cross-link" description="Isoglutamyl lysine isopeptide (Lys-Gln) (interchain with Q-Cter in protein Pup)" evidence="2">
    <location>
        <position position="151"/>
    </location>
</feature>
<feature type="helix" evidence="5">
    <location>
        <begin position="15"/>
        <end position="18"/>
    </location>
</feature>
<feature type="helix" evidence="5">
    <location>
        <begin position="19"/>
        <end position="22"/>
    </location>
</feature>
<feature type="strand" evidence="5">
    <location>
        <begin position="41"/>
        <end position="43"/>
    </location>
</feature>
<feature type="helix" evidence="5">
    <location>
        <begin position="45"/>
        <end position="51"/>
    </location>
</feature>
<feature type="strand" evidence="5">
    <location>
        <begin position="52"/>
        <end position="59"/>
    </location>
</feature>
<feature type="helix" evidence="5">
    <location>
        <begin position="60"/>
        <end position="62"/>
    </location>
</feature>
<feature type="helix" evidence="5">
    <location>
        <begin position="70"/>
        <end position="82"/>
    </location>
</feature>
<feature type="strand" evidence="5">
    <location>
        <begin position="86"/>
        <end position="90"/>
    </location>
</feature>
<feature type="helix" evidence="5">
    <location>
        <begin position="95"/>
        <end position="107"/>
    </location>
</feature>
<feature type="strand" evidence="5">
    <location>
        <begin position="110"/>
        <end position="115"/>
    </location>
</feature>
<feature type="helix" evidence="5">
    <location>
        <begin position="122"/>
        <end position="130"/>
    </location>
</feature>
<feature type="strand" evidence="5">
    <location>
        <begin position="134"/>
        <end position="140"/>
    </location>
</feature>
<feature type="helix" evidence="5">
    <location>
        <begin position="142"/>
        <end position="155"/>
    </location>
</feature>
<feature type="strand" evidence="5">
    <location>
        <begin position="159"/>
        <end position="161"/>
    </location>
</feature>
<feature type="helix" evidence="5">
    <location>
        <begin position="167"/>
        <end position="173"/>
    </location>
</feature>
<feature type="helix" evidence="5">
    <location>
        <begin position="175"/>
        <end position="184"/>
    </location>
</feature>
<feature type="strand" evidence="5">
    <location>
        <begin position="189"/>
        <end position="194"/>
    </location>
</feature>
<feature type="strand" evidence="5">
    <location>
        <begin position="196"/>
        <end position="198"/>
    </location>
</feature>
<feature type="helix" evidence="5">
    <location>
        <begin position="199"/>
        <end position="213"/>
    </location>
</feature>
<feature type="strand" evidence="5">
    <location>
        <begin position="222"/>
        <end position="228"/>
    </location>
</feature>
<feature type="helix" evidence="5">
    <location>
        <begin position="229"/>
        <end position="231"/>
    </location>
</feature>
<feature type="helix" evidence="5">
    <location>
        <begin position="233"/>
        <end position="236"/>
    </location>
</feature>
<feature type="helix" evidence="5">
    <location>
        <begin position="248"/>
        <end position="250"/>
    </location>
</feature>
<feature type="helix" evidence="5">
    <location>
        <begin position="258"/>
        <end position="268"/>
    </location>
</feature>
<feature type="strand" evidence="5">
    <location>
        <begin position="271"/>
        <end position="275"/>
    </location>
</feature>
<feature type="helix" evidence="5">
    <location>
        <begin position="277"/>
        <end position="291"/>
    </location>
</feature>
<feature type="helix" evidence="5">
    <location>
        <begin position="297"/>
        <end position="312"/>
    </location>
</feature>
<feature type="strand" evidence="5">
    <location>
        <begin position="320"/>
        <end position="325"/>
    </location>
</feature>
<feature type="helix" evidence="5">
    <location>
        <begin position="329"/>
        <end position="331"/>
    </location>
</feature>
<feature type="helix" evidence="5">
    <location>
        <begin position="333"/>
        <end position="337"/>
    </location>
</feature>
<feature type="helix" evidence="5">
    <location>
        <begin position="350"/>
        <end position="355"/>
    </location>
</feature>
<organism>
    <name type="scientific">Mycobacterium tuberculosis (strain ATCC 25618 / H37Rv)</name>
    <dbReference type="NCBI Taxonomy" id="83332"/>
    <lineage>
        <taxon>Bacteria</taxon>
        <taxon>Bacillati</taxon>
        <taxon>Actinomycetota</taxon>
        <taxon>Actinomycetes</taxon>
        <taxon>Mycobacteriales</taxon>
        <taxon>Mycobacteriaceae</taxon>
        <taxon>Mycobacterium</taxon>
        <taxon>Mycobacterium tuberculosis complex</taxon>
    </lineage>
</organism>
<evidence type="ECO:0000269" key="1">
    <source>
    </source>
</evidence>
<evidence type="ECO:0000269" key="2">
    <source>
    </source>
</evidence>
<evidence type="ECO:0000305" key="3"/>
<evidence type="ECO:0007744" key="4">
    <source>
    </source>
</evidence>
<evidence type="ECO:0007829" key="5">
    <source>
        <dbReference type="PDB" id="2D1F"/>
    </source>
</evidence>
<dbReference type="EC" id="4.2.3.1"/>
<dbReference type="EMBL" id="AL123456">
    <property type="protein sequence ID" value="CCP44052.1"/>
    <property type="molecule type" value="Genomic_DNA"/>
</dbReference>
<dbReference type="PIR" id="C70773">
    <property type="entry name" value="C70773"/>
</dbReference>
<dbReference type="RefSeq" id="NP_215811.1">
    <property type="nucleotide sequence ID" value="NC_000962.3"/>
</dbReference>
<dbReference type="RefSeq" id="WP_003406652.1">
    <property type="nucleotide sequence ID" value="NZ_NVQJ01000030.1"/>
</dbReference>
<dbReference type="PDB" id="2D1F">
    <property type="method" value="X-ray"/>
    <property type="resolution" value="2.50 A"/>
    <property type="chains" value="A/B=1-360"/>
</dbReference>
<dbReference type="PDBsum" id="2D1F"/>
<dbReference type="SMR" id="P9WG59"/>
<dbReference type="FunCoup" id="P9WG59">
    <property type="interactions" value="163"/>
</dbReference>
<dbReference type="STRING" id="83332.Rv1295"/>
<dbReference type="iPTMnet" id="P9WG59"/>
<dbReference type="PaxDb" id="83332-Rv1295"/>
<dbReference type="DNASU" id="886957"/>
<dbReference type="GeneID" id="45425269"/>
<dbReference type="GeneID" id="886957"/>
<dbReference type="KEGG" id="mtu:Rv1295"/>
<dbReference type="KEGG" id="mtv:RVBD_1295"/>
<dbReference type="TubercuList" id="Rv1295"/>
<dbReference type="eggNOG" id="COG0498">
    <property type="taxonomic scope" value="Bacteria"/>
</dbReference>
<dbReference type="InParanoid" id="P9WG59"/>
<dbReference type="OrthoDB" id="9778118at2"/>
<dbReference type="PhylomeDB" id="P9WG59"/>
<dbReference type="BRENDA" id="4.2.3.1">
    <property type="organism ID" value="3445"/>
</dbReference>
<dbReference type="UniPathway" id="UPA00050">
    <property type="reaction ID" value="UER00065"/>
</dbReference>
<dbReference type="EvolutionaryTrace" id="P9WG59"/>
<dbReference type="Proteomes" id="UP000001584">
    <property type="component" value="Chromosome"/>
</dbReference>
<dbReference type="GO" id="GO:0005737">
    <property type="term" value="C:cytoplasm"/>
    <property type="evidence" value="ECO:0000318"/>
    <property type="project" value="GO_Central"/>
</dbReference>
<dbReference type="GO" id="GO:0005829">
    <property type="term" value="C:cytosol"/>
    <property type="evidence" value="ECO:0007005"/>
    <property type="project" value="MTBBASE"/>
</dbReference>
<dbReference type="GO" id="GO:0005886">
    <property type="term" value="C:plasma membrane"/>
    <property type="evidence" value="ECO:0007005"/>
    <property type="project" value="MTBBASE"/>
</dbReference>
<dbReference type="GO" id="GO:0030170">
    <property type="term" value="F:pyridoxal phosphate binding"/>
    <property type="evidence" value="ECO:0000314"/>
    <property type="project" value="MTBBASE"/>
</dbReference>
<dbReference type="GO" id="GO:0004795">
    <property type="term" value="F:threonine synthase activity"/>
    <property type="evidence" value="ECO:0000314"/>
    <property type="project" value="MTBBASE"/>
</dbReference>
<dbReference type="GO" id="GO:0019344">
    <property type="term" value="P:cysteine biosynthetic process"/>
    <property type="evidence" value="ECO:0000318"/>
    <property type="project" value="GO_Central"/>
</dbReference>
<dbReference type="GO" id="GO:0009088">
    <property type="term" value="P:threonine biosynthetic process"/>
    <property type="evidence" value="ECO:0000315"/>
    <property type="project" value="MTBBASE"/>
</dbReference>
<dbReference type="CDD" id="cd01563">
    <property type="entry name" value="Thr-synth_1"/>
    <property type="match status" value="1"/>
</dbReference>
<dbReference type="FunFam" id="3.40.50.1100:FF:000014">
    <property type="entry name" value="Threonine synthase"/>
    <property type="match status" value="1"/>
</dbReference>
<dbReference type="Gene3D" id="3.40.50.1100">
    <property type="match status" value="2"/>
</dbReference>
<dbReference type="InterPro" id="IPR050147">
    <property type="entry name" value="Ser/Thr_Dehydratase"/>
</dbReference>
<dbReference type="InterPro" id="IPR000634">
    <property type="entry name" value="Ser/Thr_deHydtase_PyrdxlP-BS"/>
</dbReference>
<dbReference type="InterPro" id="IPR004450">
    <property type="entry name" value="Thr_synthase-like"/>
</dbReference>
<dbReference type="InterPro" id="IPR026260">
    <property type="entry name" value="Thr_Synthase_bac/arc"/>
</dbReference>
<dbReference type="InterPro" id="IPR001926">
    <property type="entry name" value="TrpB-like_PALP"/>
</dbReference>
<dbReference type="InterPro" id="IPR036052">
    <property type="entry name" value="TrpB-like_PALP_sf"/>
</dbReference>
<dbReference type="NCBIfam" id="TIGR00260">
    <property type="entry name" value="thrC"/>
    <property type="match status" value="1"/>
</dbReference>
<dbReference type="PANTHER" id="PTHR48078:SF6">
    <property type="entry name" value="L-THREONINE DEHYDRATASE CATABOLIC TDCB"/>
    <property type="match status" value="1"/>
</dbReference>
<dbReference type="PANTHER" id="PTHR48078">
    <property type="entry name" value="THREONINE DEHYDRATASE, MITOCHONDRIAL-RELATED"/>
    <property type="match status" value="1"/>
</dbReference>
<dbReference type="Pfam" id="PF00291">
    <property type="entry name" value="PALP"/>
    <property type="match status" value="1"/>
</dbReference>
<dbReference type="PIRSF" id="PIRSF038945">
    <property type="entry name" value="Thr_synthase"/>
    <property type="match status" value="1"/>
</dbReference>
<dbReference type="SUPFAM" id="SSF53686">
    <property type="entry name" value="Tryptophan synthase beta subunit-like PLP-dependent enzymes"/>
    <property type="match status" value="1"/>
</dbReference>
<dbReference type="PROSITE" id="PS00165">
    <property type="entry name" value="DEHYDRATASE_SER_THR"/>
    <property type="match status" value="1"/>
</dbReference>
<comment type="function">
    <text evidence="1">Catalyzes the gamma-elimination of phosphate from L-phosphohomoserine and the beta-addition of water to produce L-threonine.</text>
</comment>
<comment type="catalytic activity">
    <reaction evidence="1">
        <text>O-phospho-L-homoserine + H2O = L-threonine + phosphate</text>
        <dbReference type="Rhea" id="RHEA:10840"/>
        <dbReference type="ChEBI" id="CHEBI:15377"/>
        <dbReference type="ChEBI" id="CHEBI:43474"/>
        <dbReference type="ChEBI" id="CHEBI:57590"/>
        <dbReference type="ChEBI" id="CHEBI:57926"/>
        <dbReference type="EC" id="4.2.3.1"/>
    </reaction>
</comment>
<comment type="cofactor">
    <cofactor evidence="1">
        <name>pyridoxal 5'-phosphate</name>
        <dbReference type="ChEBI" id="CHEBI:597326"/>
    </cofactor>
</comment>
<comment type="activity regulation">
    <text evidence="1">Activity is not influenced by the addition of S-adenosylmethionine, the allosteric activator of TS from Arabidopsis thaliana.</text>
</comment>
<comment type="biophysicochemical properties">
    <kinetics>
        <KM evidence="1">1.2 mM for O-phospho-L-homoserine (at pH 8.4 and 25 degrees Celsius)</KM>
    </kinetics>
    <phDependence>
        <text evidence="1">Optimum pH is 9.5-10.5. Is inactive at pH values of 7 or less.</text>
    </phDependence>
    <temperatureDependence>
        <text evidence="1">Loses less than 10% of the initial activity during a 10 minutes incubation at 65 degrees Celsius. At 80 degrees Celsius, 90% of the activity is lost over the same time period.</text>
    </temperatureDependence>
</comment>
<comment type="pathway">
    <text>Amino-acid biosynthesis; L-threonine biosynthesis; L-threonine from L-aspartate: step 5/5.</text>
</comment>
<comment type="subunit">
    <text evidence="1">Homodimer.</text>
</comment>
<comment type="miscellaneous">
    <text>Was identified as a high-confidence drug target.</text>
</comment>
<comment type="similarity">
    <text evidence="3">Belongs to the threonine synthase family.</text>
</comment>
<keyword id="KW-0002">3D-structure</keyword>
<keyword id="KW-0007">Acetylation</keyword>
<keyword id="KW-0028">Amino-acid biosynthesis</keyword>
<keyword id="KW-1017">Isopeptide bond</keyword>
<keyword id="KW-0456">Lyase</keyword>
<keyword id="KW-0663">Pyridoxal phosphate</keyword>
<keyword id="KW-1185">Reference proteome</keyword>
<keyword id="KW-0791">Threonine biosynthesis</keyword>
<keyword id="KW-0832">Ubl conjugation</keyword>
<gene>
    <name type="primary">thrC</name>
    <name type="ordered locus">Rv1295</name>
    <name type="ORF">MTCY373.15</name>
</gene>
<sequence length="360" mass="37322">MTVPPTATHQPWPGVIAAYRDRLPVGDDWTPVTLLEGGTPLIAATNLSKQTGCTIHLKVEGLNPTGSFKDRGMTMAVTDALAHGQRAVLCASTGNTSASAAAYAARAGITCAVLIPQGKIAMGKLAQAVMHGAKIIQIDGNFDDCLELARKMAADFPTISLVNSVNPVRIEGQKTAAFEIVDVLGTAPDVHALPVGNAGNITAYWKGYTEYHQLGLIDKLPRMLGTQAAGAAPLVLGEPVSHPETIATAIRIGSPASWTSAVEAQQQSKGRFLAASDEEILAAYHLVARVEGVFVEPASAASIAGLLKAIDDGWVARGSTVVCTVTGNGLKDPDTALKDMPSVSPVPVDPVAVVEKLGLA</sequence>